<protein>
    <recommendedName>
        <fullName evidence="11">Delta-1-pyrroline-5-carboxylate dehydrogenase 12A1, mitochondrial</fullName>
        <shortName evidence="9">AtP5CDH</shortName>
        <shortName evidence="9">P5C dehydrogenase</shortName>
        <ecNumber evidence="5">1.2.1.88</ecNumber>
    </recommendedName>
    <alternativeName>
        <fullName evidence="10">Aldehyde dehydrogenase family 12 member A1</fullName>
    </alternativeName>
    <alternativeName>
        <fullName evidence="11">L-glutamate gamma-semialdehyde dehydrogenase</fullName>
    </alternativeName>
</protein>
<organism>
    <name type="scientific">Arabidopsis thaliana</name>
    <name type="common">Mouse-ear cress</name>
    <dbReference type="NCBI Taxonomy" id="3702"/>
    <lineage>
        <taxon>Eukaryota</taxon>
        <taxon>Viridiplantae</taxon>
        <taxon>Streptophyta</taxon>
        <taxon>Embryophyta</taxon>
        <taxon>Tracheophyta</taxon>
        <taxon>Spermatophyta</taxon>
        <taxon>Magnoliopsida</taxon>
        <taxon>eudicotyledons</taxon>
        <taxon>Gunneridae</taxon>
        <taxon>Pentapetalae</taxon>
        <taxon>rosids</taxon>
        <taxon>malvids</taxon>
        <taxon>Brassicales</taxon>
        <taxon>Brassicaceae</taxon>
        <taxon>Camelineae</taxon>
        <taxon>Arabidopsis</taxon>
    </lineage>
</organism>
<keyword id="KW-0496">Mitochondrion</keyword>
<keyword id="KW-0520">NAD</keyword>
<keyword id="KW-0560">Oxidoreductase</keyword>
<keyword id="KW-1185">Reference proteome</keyword>
<keyword id="KW-0809">Transit peptide</keyword>
<feature type="transit peptide" description="Mitochondrion" evidence="3">
    <location>
        <begin position="1"/>
        <end status="unknown"/>
    </location>
</feature>
<feature type="chain" id="PRO_0000256062" description="Delta-1-pyrroline-5-carboxylate dehydrogenase 12A1, mitochondrial">
    <location>
        <begin status="unknown"/>
        <end position="556"/>
    </location>
</feature>
<feature type="active site" description="Proton acceptor" evidence="4">
    <location>
        <position position="301"/>
    </location>
</feature>
<feature type="active site" description="Nucleophile" evidence="4">
    <location>
        <position position="336"/>
    </location>
</feature>
<feature type="binding site" evidence="1">
    <location>
        <begin position="282"/>
        <end position="287"/>
    </location>
    <ligand>
        <name>NAD(+)</name>
        <dbReference type="ChEBI" id="CHEBI:57540"/>
    </ligand>
</feature>
<feature type="site" description="Transition state stabilizer" evidence="2">
    <location>
        <position position="207"/>
    </location>
</feature>
<feature type="sequence conflict" description="In Ref. 1; AAK73756." evidence="11" ref="1">
    <original>A</original>
    <variation>S</variation>
    <location>
        <position position="48"/>
    </location>
</feature>
<feature type="sequence conflict" description="In Ref. 1; AAK73756." evidence="11" ref="1">
    <original>E</original>
    <variation>D</variation>
    <location>
        <position position="462"/>
    </location>
</feature>
<dbReference type="EC" id="1.2.1.88" evidence="5"/>
<dbReference type="EMBL" id="AY039787">
    <property type="protein sequence ID" value="AAK73756.1"/>
    <property type="molecule type" value="mRNA"/>
</dbReference>
<dbReference type="EMBL" id="AB015469">
    <property type="protein sequence ID" value="BAB11503.1"/>
    <property type="status" value="ALT_SEQ"/>
    <property type="molecule type" value="Genomic_DNA"/>
</dbReference>
<dbReference type="EMBL" id="CP002688">
    <property type="protein sequence ID" value="AED97619.1"/>
    <property type="molecule type" value="Genomic_DNA"/>
</dbReference>
<dbReference type="EMBL" id="AY065072">
    <property type="protein sequence ID" value="AAL38248.1"/>
    <property type="molecule type" value="mRNA"/>
</dbReference>
<dbReference type="EMBL" id="BT000746">
    <property type="protein sequence ID" value="AAN31887.1"/>
    <property type="molecule type" value="mRNA"/>
</dbReference>
<dbReference type="EMBL" id="BT010391">
    <property type="protein sequence ID" value="AAQ56834.1"/>
    <property type="molecule type" value="mRNA"/>
</dbReference>
<dbReference type="RefSeq" id="NP_568955.1">
    <property type="nucleotide sequence ID" value="NM_125647.4"/>
</dbReference>
<dbReference type="SMR" id="Q8VZC3"/>
<dbReference type="BioGRID" id="21617">
    <property type="interactions" value="1"/>
</dbReference>
<dbReference type="FunCoup" id="Q8VZC3">
    <property type="interactions" value="492"/>
</dbReference>
<dbReference type="IntAct" id="Q8VZC3">
    <property type="interactions" value="1"/>
</dbReference>
<dbReference type="STRING" id="3702.Q8VZC3"/>
<dbReference type="PaxDb" id="3702-AT5G62530.1"/>
<dbReference type="ProteomicsDB" id="245065"/>
<dbReference type="EnsemblPlants" id="AT5G62530.1">
    <property type="protein sequence ID" value="AT5G62530.1"/>
    <property type="gene ID" value="AT5G62530"/>
</dbReference>
<dbReference type="GeneID" id="836373"/>
<dbReference type="Gramene" id="AT5G62530.1">
    <property type="protein sequence ID" value="AT5G62530.1"/>
    <property type="gene ID" value="AT5G62530"/>
</dbReference>
<dbReference type="KEGG" id="ath:AT5G62530"/>
<dbReference type="Araport" id="AT5G62530"/>
<dbReference type="TAIR" id="AT5G62530">
    <property type="gene designation" value="ALDH12A1"/>
</dbReference>
<dbReference type="eggNOG" id="KOG2451">
    <property type="taxonomic scope" value="Eukaryota"/>
</dbReference>
<dbReference type="HOGENOM" id="CLU_039242_0_0_1"/>
<dbReference type="InParanoid" id="Q8VZC3"/>
<dbReference type="OMA" id="NGFRWPF"/>
<dbReference type="OrthoDB" id="440325at2759"/>
<dbReference type="PhylomeDB" id="Q8VZC3"/>
<dbReference type="BioCyc" id="ARA:AT5G62530-MONOMER"/>
<dbReference type="BRENDA" id="1.2.1.88">
    <property type="organism ID" value="399"/>
</dbReference>
<dbReference type="UniPathway" id="UPA00261">
    <property type="reaction ID" value="UER00374"/>
</dbReference>
<dbReference type="PRO" id="PR:Q8VZC3"/>
<dbReference type="Proteomes" id="UP000006548">
    <property type="component" value="Chromosome 5"/>
</dbReference>
<dbReference type="ExpressionAtlas" id="Q8VZC3">
    <property type="expression patterns" value="baseline and differential"/>
</dbReference>
<dbReference type="GO" id="GO:0005829">
    <property type="term" value="C:cytosol"/>
    <property type="evidence" value="ECO:0007005"/>
    <property type="project" value="TAIR"/>
</dbReference>
<dbReference type="GO" id="GO:0005759">
    <property type="term" value="C:mitochondrial matrix"/>
    <property type="evidence" value="ECO:0007669"/>
    <property type="project" value="UniProtKB-SubCell"/>
</dbReference>
<dbReference type="GO" id="GO:0005739">
    <property type="term" value="C:mitochondrion"/>
    <property type="evidence" value="ECO:0000314"/>
    <property type="project" value="TAIR"/>
</dbReference>
<dbReference type="GO" id="GO:0009536">
    <property type="term" value="C:plastid"/>
    <property type="evidence" value="ECO:0007005"/>
    <property type="project" value="TAIR"/>
</dbReference>
<dbReference type="GO" id="GO:0003842">
    <property type="term" value="F:1-pyrroline-5-carboxylate dehydrogenase activity"/>
    <property type="evidence" value="ECO:0000315"/>
    <property type="project" value="TAIR"/>
</dbReference>
<dbReference type="GO" id="GO:0004029">
    <property type="term" value="F:aldehyde dehydrogenase (NAD+) activity"/>
    <property type="evidence" value="ECO:0007669"/>
    <property type="project" value="InterPro"/>
</dbReference>
<dbReference type="GO" id="GO:0050897">
    <property type="term" value="F:cobalt ion binding"/>
    <property type="evidence" value="ECO:0007005"/>
    <property type="project" value="TAIR"/>
</dbReference>
<dbReference type="GO" id="GO:0008270">
    <property type="term" value="F:zinc ion binding"/>
    <property type="evidence" value="ECO:0007005"/>
    <property type="project" value="TAIR"/>
</dbReference>
<dbReference type="GO" id="GO:0010133">
    <property type="term" value="P:proline catabolic process to glutamate"/>
    <property type="evidence" value="ECO:0000315"/>
    <property type="project" value="TAIR"/>
</dbReference>
<dbReference type="GO" id="GO:0006560">
    <property type="term" value="P:proline metabolic process"/>
    <property type="evidence" value="ECO:0000304"/>
    <property type="project" value="TAIR"/>
</dbReference>
<dbReference type="GO" id="GO:0072593">
    <property type="term" value="P:reactive oxygen species metabolic process"/>
    <property type="evidence" value="ECO:0000315"/>
    <property type="project" value="TAIR"/>
</dbReference>
<dbReference type="GO" id="GO:0009651">
    <property type="term" value="P:response to salt stress"/>
    <property type="evidence" value="ECO:0000270"/>
    <property type="project" value="TAIR"/>
</dbReference>
<dbReference type="CDD" id="cd07126">
    <property type="entry name" value="ALDH_F12_P5CDH"/>
    <property type="match status" value="1"/>
</dbReference>
<dbReference type="FunFam" id="3.40.309.10:FF:000023">
    <property type="entry name" value="Aldehyde dehydrogenase 12"/>
    <property type="match status" value="1"/>
</dbReference>
<dbReference type="FunFam" id="3.40.605.10:FF:000019">
    <property type="entry name" value="probable aldehyde dehydrogenase"/>
    <property type="match status" value="1"/>
</dbReference>
<dbReference type="Gene3D" id="3.40.605.10">
    <property type="entry name" value="Aldehyde Dehydrogenase, Chain A, domain 1"/>
    <property type="match status" value="1"/>
</dbReference>
<dbReference type="Gene3D" id="3.40.309.10">
    <property type="entry name" value="Aldehyde Dehydrogenase, Chain A, domain 2"/>
    <property type="match status" value="1"/>
</dbReference>
<dbReference type="InterPro" id="IPR016161">
    <property type="entry name" value="Ald_DH/histidinol_DH"/>
</dbReference>
<dbReference type="InterPro" id="IPR016163">
    <property type="entry name" value="Ald_DH_C"/>
</dbReference>
<dbReference type="InterPro" id="IPR016160">
    <property type="entry name" value="Ald_DH_CS_CYS"/>
</dbReference>
<dbReference type="InterPro" id="IPR016162">
    <property type="entry name" value="Ald_DH_N"/>
</dbReference>
<dbReference type="InterPro" id="IPR015590">
    <property type="entry name" value="Aldehyde_DH_dom"/>
</dbReference>
<dbReference type="InterPro" id="IPR044638">
    <property type="entry name" value="ALDH7A1-like"/>
</dbReference>
<dbReference type="PANTHER" id="PTHR43521">
    <property type="entry name" value="ALPHA-AMINOADIPIC SEMIALDEHYDE DEHYDROGENASE"/>
    <property type="match status" value="1"/>
</dbReference>
<dbReference type="PANTHER" id="PTHR43521:SF7">
    <property type="entry name" value="DELTA-1-PYRROLINE-5-CARBOXYLATE DEHYDROGENASE 12A1, MITOCHONDRIAL"/>
    <property type="match status" value="1"/>
</dbReference>
<dbReference type="Pfam" id="PF00171">
    <property type="entry name" value="Aldedh"/>
    <property type="match status" value="1"/>
</dbReference>
<dbReference type="SUPFAM" id="SSF53720">
    <property type="entry name" value="ALDH-like"/>
    <property type="match status" value="1"/>
</dbReference>
<dbReference type="PROSITE" id="PS00070">
    <property type="entry name" value="ALDEHYDE_DEHYDR_CYS"/>
    <property type="match status" value="1"/>
</dbReference>
<comment type="function">
    <text evidence="5 6 7 8">Plays a role in the inhibition of programmed cell death by converting the toxic proline catabolism intermediate (s)-1-pyrroline-5-carboxylate (P5C) to glutamate.</text>
</comment>
<comment type="catalytic activity">
    <reaction evidence="5">
        <text>(S)-1-pyrroline-5-carboxylate + NAD(+) + 2 H2O = L-glutamate + NADH + H(+)</text>
        <dbReference type="Rhea" id="RHEA:16417"/>
        <dbReference type="ChEBI" id="CHEBI:15377"/>
        <dbReference type="ChEBI" id="CHEBI:15378"/>
        <dbReference type="ChEBI" id="CHEBI:17388"/>
        <dbReference type="ChEBI" id="CHEBI:29985"/>
        <dbReference type="ChEBI" id="CHEBI:57540"/>
        <dbReference type="ChEBI" id="CHEBI:57945"/>
        <dbReference type="EC" id="1.2.1.88"/>
    </reaction>
    <physiologicalReaction direction="left-to-right" evidence="5">
        <dbReference type="Rhea" id="RHEA:16418"/>
    </physiologicalReaction>
</comment>
<comment type="pathway">
    <text evidence="11">Amino-acid degradation; L-proline degradation into L-glutamate; L-glutamate from L-proline: step 2/2.</text>
</comment>
<comment type="subcellular location">
    <subcellularLocation>
        <location evidence="12">Mitochondrion matrix</location>
    </subcellularLocation>
</comment>
<comment type="tissue specificity">
    <text evidence="5 6">Highly expressed in flowers (PubMed:11532180). Constitutively expressed at low levels in the other tissues (PubMed:11532180). Highly expressed in pollen grains and tissues undergoing cell death (PubMed:15548746). Expressed in old leaves, mature siliques and developing embryos (PubMed:15548746).</text>
</comment>
<comment type="induction">
    <text evidence="5 6 7">Induced by treatment with proline (PubMed:11532180, PubMed:15548746). Induced by drought stress (PubMed:19635803).</text>
</comment>
<comment type="disruption phenotype">
    <text evidence="6 7">No visible phenotype under normal growth conditions, but mutant plants are hypersensitive to treatment with proline (PubMed:15548746). Hypersensitivity to heat stress (PubMed:19635803).</text>
</comment>
<comment type="similarity">
    <text evidence="11">Belongs to the aldehyde dehydrogenase family.</text>
</comment>
<comment type="sequence caution" evidence="11">
    <conflict type="erroneous gene model prediction">
        <sequence resource="EMBL-CDS" id="BAB11503"/>
    </conflict>
</comment>
<accession>Q8VZC3</accession>
<accession>Q93Y55</accession>
<accession>Q9FJJ2</accession>
<sequence>MYRVFASRALRAKSLCDKSSTSLASLTLSRLNHSIPFATVDAEELSGAHPAEVQSFVQGKWIGSSNHNTLLDPLNGEPFIKVAEVDESGTQPFVDSLSQCPKHGLHNPFKSPERYLLYGDISTKAAHMLALPKVADFFARLIQRVAPKSYQQAAGEVFVTRKFLENFCGDQVRFLARSFAIPGNHLGQQSHGYRWPYGPVTIVTPFNFPLEIPLLQLMGALYMGNKPLLKVDSKVSIVMEQMMRLLHYCGLPAEDVDFINSDGKTMNKILLEANPRMTLFTGSSRVAEKLALDLKGRIRLEDAGFDWKVLGPDVQEVDYVAWQCDQDAYACSGQKCSAQSMLFVHENWSKTPLVSKLKELAERRKLEDLTIGPVLTFTTEAMLEHMENLLQIPGSKLLFGGKELKNHSIPSIYGALEPTAVYVPIEEILKDNKTYELVTKEIFGPFQIVTEYKKDQLPLVLEALERMHAHLTAAVVSNDPIFLQEVIGNSVNGTTYAGLRGRTTGAPQNHWFGPAGDPRGAGIGTPEAIKLVWSCHREVIYDYGPVPQGWELPPST</sequence>
<name>AL121_ARATH</name>
<proteinExistence type="evidence at protein level"/>
<gene>
    <name evidence="10" type="primary">ALDH12A1</name>
    <name evidence="9" type="synonym">P5CDH</name>
    <name evidence="13" type="ordered locus">At5g62530</name>
    <name evidence="14" type="ORF">K19B1.14</name>
</gene>
<reference key="1">
    <citation type="journal article" date="2001" name="Plant J.">
        <title>A nuclear gene encoding mitochondrial delta-1-pyrroline-5-carboxylate dehydrogenase and its potential role in protection from proline toxicity.</title>
        <authorList>
            <person name="Deuschle K."/>
            <person name="Funck D."/>
            <person name="Hellmann H."/>
            <person name="Daeschner K."/>
            <person name="Binder S."/>
            <person name="Frommer W.B."/>
        </authorList>
    </citation>
    <scope>NUCLEOTIDE SEQUENCE [MRNA]</scope>
    <scope>FUNCTION</scope>
    <scope>CATALYTIC ACTIVITY</scope>
    <scope>SUBCELLULAR LOCATION</scope>
    <scope>TISSUE SPECIFICITY</scope>
    <scope>INDUCTION</scope>
</reference>
<reference key="2">
    <citation type="journal article" date="1998" name="DNA Res.">
        <title>Structural analysis of Arabidopsis thaliana chromosome 5. VII. Sequence features of the regions of 1,013,767 bp covered by sixteen physically assigned P1 and TAC clones.</title>
        <authorList>
            <person name="Nakamura Y."/>
            <person name="Sato S."/>
            <person name="Asamizu E."/>
            <person name="Kaneko T."/>
            <person name="Kotani H."/>
            <person name="Miyajima N."/>
            <person name="Tabata S."/>
        </authorList>
    </citation>
    <scope>NUCLEOTIDE SEQUENCE [LARGE SCALE GENOMIC DNA]</scope>
    <source>
        <strain>cv. Columbia</strain>
    </source>
</reference>
<reference key="3">
    <citation type="journal article" date="2017" name="Plant J.">
        <title>Araport11: a complete reannotation of the Arabidopsis thaliana reference genome.</title>
        <authorList>
            <person name="Cheng C.Y."/>
            <person name="Krishnakumar V."/>
            <person name="Chan A.P."/>
            <person name="Thibaud-Nissen F."/>
            <person name="Schobel S."/>
            <person name="Town C.D."/>
        </authorList>
    </citation>
    <scope>GENOME REANNOTATION</scope>
    <source>
        <strain>cv. Columbia</strain>
    </source>
</reference>
<reference key="4">
    <citation type="journal article" date="2003" name="Science">
        <title>Empirical analysis of transcriptional activity in the Arabidopsis genome.</title>
        <authorList>
            <person name="Yamada K."/>
            <person name="Lim J."/>
            <person name="Dale J.M."/>
            <person name="Chen H."/>
            <person name="Shinn P."/>
            <person name="Palm C.J."/>
            <person name="Southwick A.M."/>
            <person name="Wu H.C."/>
            <person name="Kim C.J."/>
            <person name="Nguyen M."/>
            <person name="Pham P.K."/>
            <person name="Cheuk R.F."/>
            <person name="Karlin-Newmann G."/>
            <person name="Liu S.X."/>
            <person name="Lam B."/>
            <person name="Sakano H."/>
            <person name="Wu T."/>
            <person name="Yu G."/>
            <person name="Miranda M."/>
            <person name="Quach H.L."/>
            <person name="Tripp M."/>
            <person name="Chang C.H."/>
            <person name="Lee J.M."/>
            <person name="Toriumi M.J."/>
            <person name="Chan M.M."/>
            <person name="Tang C.C."/>
            <person name="Onodera C.S."/>
            <person name="Deng J.M."/>
            <person name="Akiyama K."/>
            <person name="Ansari Y."/>
            <person name="Arakawa T."/>
            <person name="Banh J."/>
            <person name="Banno F."/>
            <person name="Bowser L."/>
            <person name="Brooks S.Y."/>
            <person name="Carninci P."/>
            <person name="Chao Q."/>
            <person name="Choy N."/>
            <person name="Enju A."/>
            <person name="Goldsmith A.D."/>
            <person name="Gurjal M."/>
            <person name="Hansen N.F."/>
            <person name="Hayashizaki Y."/>
            <person name="Johnson-Hopson C."/>
            <person name="Hsuan V.W."/>
            <person name="Iida K."/>
            <person name="Karnes M."/>
            <person name="Khan S."/>
            <person name="Koesema E."/>
            <person name="Ishida J."/>
            <person name="Jiang P.X."/>
            <person name="Jones T."/>
            <person name="Kawai J."/>
            <person name="Kamiya A."/>
            <person name="Meyers C."/>
            <person name="Nakajima M."/>
            <person name="Narusaka M."/>
            <person name="Seki M."/>
            <person name="Sakurai T."/>
            <person name="Satou M."/>
            <person name="Tamse R."/>
            <person name="Vaysberg M."/>
            <person name="Wallender E.K."/>
            <person name="Wong C."/>
            <person name="Yamamura Y."/>
            <person name="Yuan S."/>
            <person name="Shinozaki K."/>
            <person name="Davis R.W."/>
            <person name="Theologis A."/>
            <person name="Ecker J.R."/>
        </authorList>
    </citation>
    <scope>NUCLEOTIDE SEQUENCE [LARGE SCALE MRNA]</scope>
    <source>
        <strain>cv. Columbia</strain>
    </source>
</reference>
<reference key="5">
    <citation type="journal article" date="2004" name="Plant Cell">
        <title>The role of [Delta]1-pyrroline-5-carboxylate dehydrogenase in proline degradation.</title>
        <authorList>
            <person name="Deuschle K."/>
            <person name="Funck D."/>
            <person name="Forlani G."/>
            <person name="Stransky H."/>
            <person name="Biehl A."/>
            <person name="Leister D."/>
            <person name="van der Graaff E."/>
            <person name="Kunze R."/>
            <person name="Frommer W.B."/>
        </authorList>
    </citation>
    <scope>FUNCTION</scope>
    <scope>TISSUE SPECIFICITY</scope>
    <scope>INDUCTION</scope>
    <scope>DISRUPTION PHENOTYPE</scope>
</reference>
<reference key="6">
    <citation type="journal article" date="2004" name="Trends Plant Sci.">
        <title>The ALDH gene superfamily of Arabidopsis.</title>
        <authorList>
            <person name="Kirch H.-H."/>
            <person name="Bartels D."/>
            <person name="Wei Y."/>
            <person name="Schnable P.S."/>
            <person name="Wood A.J."/>
        </authorList>
    </citation>
    <scope>NOMENCLATURE</scope>
</reference>
<reference key="7">
    <citation type="journal article" date="2009" name="J. Biol. Chem.">
        <title>Unraveling delta1-pyrroline-5-carboxylate-proline cycle in plants by uncoupled expression of proline oxidation enzymes.</title>
        <authorList>
            <person name="Miller G."/>
            <person name="Honig A."/>
            <person name="Stein H."/>
            <person name="Suzuki N."/>
            <person name="Mittler R."/>
            <person name="Zilberstein A."/>
        </authorList>
    </citation>
    <scope>FUNCTION</scope>
    <scope>INDUCTION</scope>
    <scope>DISRUPTION PHENOTYPE</scope>
</reference>
<reference key="8">
    <citation type="journal article" date="2015" name="Front. Plant Sci.">
        <title>P5CDH affects the pathways contributing to Pro synthesis after ProDH activation by biotic and abiotic stress conditions.</title>
        <authorList>
            <person name="Rizzi Y.S."/>
            <person name="Monteoliva M.I."/>
            <person name="Fabro G."/>
            <person name="Grosso C.L."/>
            <person name="Larovere L.E."/>
            <person name="Alvarez M.E."/>
        </authorList>
    </citation>
    <scope>FUNCTION</scope>
</reference>
<evidence type="ECO:0000250" key="1">
    <source>
        <dbReference type="UniProtKB" id="P00352"/>
    </source>
</evidence>
<evidence type="ECO:0000250" key="2">
    <source>
        <dbReference type="UniProtKB" id="P20000"/>
    </source>
</evidence>
<evidence type="ECO:0000255" key="3"/>
<evidence type="ECO:0000255" key="4">
    <source>
        <dbReference type="PROSITE-ProRule" id="PRU10008"/>
    </source>
</evidence>
<evidence type="ECO:0000269" key="5">
    <source>
    </source>
</evidence>
<evidence type="ECO:0000269" key="6">
    <source>
    </source>
</evidence>
<evidence type="ECO:0000269" key="7">
    <source>
    </source>
</evidence>
<evidence type="ECO:0000269" key="8">
    <source>
    </source>
</evidence>
<evidence type="ECO:0000303" key="9">
    <source>
    </source>
</evidence>
<evidence type="ECO:0000303" key="10">
    <source>
    </source>
</evidence>
<evidence type="ECO:0000305" key="11"/>
<evidence type="ECO:0000305" key="12">
    <source>
    </source>
</evidence>
<evidence type="ECO:0000312" key="13">
    <source>
        <dbReference type="Araport" id="AT5G62530"/>
    </source>
</evidence>
<evidence type="ECO:0000312" key="14">
    <source>
        <dbReference type="EMBL" id="BAB11503.1"/>
    </source>
</evidence>